<accession>B5EXF9</accession>
<protein>
    <recommendedName>
        <fullName evidence="1">Transcription antitermination protein NusB</fullName>
    </recommendedName>
    <alternativeName>
        <fullName evidence="1">Antitermination factor NusB</fullName>
    </alternativeName>
</protein>
<comment type="function">
    <text evidence="1">Involved in transcription antitermination. Required for transcription of ribosomal RNA (rRNA) genes. Binds specifically to the boxA antiterminator sequence of the ribosomal RNA (rrn) operons.</text>
</comment>
<comment type="similarity">
    <text evidence="1">Belongs to the NusB family.</text>
</comment>
<name>NUSB_SALA4</name>
<proteinExistence type="inferred from homology"/>
<evidence type="ECO:0000255" key="1">
    <source>
        <dbReference type="HAMAP-Rule" id="MF_00073"/>
    </source>
</evidence>
<gene>
    <name evidence="1" type="primary">nusB</name>
    <name type="ordered locus">SeAg_B0457</name>
</gene>
<dbReference type="EMBL" id="CP001138">
    <property type="protein sequence ID" value="ACH50916.1"/>
    <property type="molecule type" value="Genomic_DNA"/>
</dbReference>
<dbReference type="RefSeq" id="WP_000801129.1">
    <property type="nucleotide sequence ID" value="NC_011149.1"/>
</dbReference>
<dbReference type="SMR" id="B5EXF9"/>
<dbReference type="GeneID" id="89550189"/>
<dbReference type="KEGG" id="sea:SeAg_B0457"/>
<dbReference type="HOGENOM" id="CLU_087843_4_1_6"/>
<dbReference type="Proteomes" id="UP000008819">
    <property type="component" value="Chromosome"/>
</dbReference>
<dbReference type="GO" id="GO:0005829">
    <property type="term" value="C:cytosol"/>
    <property type="evidence" value="ECO:0007669"/>
    <property type="project" value="TreeGrafter"/>
</dbReference>
<dbReference type="GO" id="GO:0003723">
    <property type="term" value="F:RNA binding"/>
    <property type="evidence" value="ECO:0007669"/>
    <property type="project" value="UniProtKB-UniRule"/>
</dbReference>
<dbReference type="GO" id="GO:0006353">
    <property type="term" value="P:DNA-templated transcription termination"/>
    <property type="evidence" value="ECO:0007669"/>
    <property type="project" value="UniProtKB-UniRule"/>
</dbReference>
<dbReference type="GO" id="GO:0031564">
    <property type="term" value="P:transcription antitermination"/>
    <property type="evidence" value="ECO:0007669"/>
    <property type="project" value="UniProtKB-KW"/>
</dbReference>
<dbReference type="CDD" id="cd00619">
    <property type="entry name" value="Terminator_NusB"/>
    <property type="match status" value="1"/>
</dbReference>
<dbReference type="FunFam" id="1.10.940.10:FF:000001">
    <property type="entry name" value="Transcription antitermination factor NusB"/>
    <property type="match status" value="1"/>
</dbReference>
<dbReference type="Gene3D" id="1.10.940.10">
    <property type="entry name" value="NusB-like"/>
    <property type="match status" value="1"/>
</dbReference>
<dbReference type="HAMAP" id="MF_00073">
    <property type="entry name" value="NusB"/>
    <property type="match status" value="1"/>
</dbReference>
<dbReference type="InterPro" id="IPR035926">
    <property type="entry name" value="NusB-like_sf"/>
</dbReference>
<dbReference type="InterPro" id="IPR011605">
    <property type="entry name" value="NusB_fam"/>
</dbReference>
<dbReference type="InterPro" id="IPR006027">
    <property type="entry name" value="NusB_RsmB_TIM44"/>
</dbReference>
<dbReference type="NCBIfam" id="TIGR01951">
    <property type="entry name" value="nusB"/>
    <property type="match status" value="1"/>
</dbReference>
<dbReference type="PANTHER" id="PTHR11078:SF3">
    <property type="entry name" value="ANTITERMINATION NUSB DOMAIN-CONTAINING PROTEIN"/>
    <property type="match status" value="1"/>
</dbReference>
<dbReference type="PANTHER" id="PTHR11078">
    <property type="entry name" value="N UTILIZATION SUBSTANCE PROTEIN B-RELATED"/>
    <property type="match status" value="1"/>
</dbReference>
<dbReference type="Pfam" id="PF01029">
    <property type="entry name" value="NusB"/>
    <property type="match status" value="1"/>
</dbReference>
<dbReference type="SUPFAM" id="SSF48013">
    <property type="entry name" value="NusB-like"/>
    <property type="match status" value="1"/>
</dbReference>
<feature type="chain" id="PRO_1000092579" description="Transcription antitermination protein NusB">
    <location>
        <begin position="1"/>
        <end position="139"/>
    </location>
</feature>
<sequence length="139" mass="15689">MKPAARRRARECAVQALYSWQLSQNDIADVEYQFLAEQDVKDVDVLYFRELLSGVATNSAYLDGLMKPYLSRLLEELGQVEKAVLRIALFELSKRSDVPYKVAINEAIELAKTFGAEDSHKFVNGVLDKAAPVIRPNKK</sequence>
<organism>
    <name type="scientific">Salmonella agona (strain SL483)</name>
    <dbReference type="NCBI Taxonomy" id="454166"/>
    <lineage>
        <taxon>Bacteria</taxon>
        <taxon>Pseudomonadati</taxon>
        <taxon>Pseudomonadota</taxon>
        <taxon>Gammaproteobacteria</taxon>
        <taxon>Enterobacterales</taxon>
        <taxon>Enterobacteriaceae</taxon>
        <taxon>Salmonella</taxon>
    </lineage>
</organism>
<reference key="1">
    <citation type="journal article" date="2011" name="J. Bacteriol.">
        <title>Comparative genomics of 28 Salmonella enterica isolates: evidence for CRISPR-mediated adaptive sublineage evolution.</title>
        <authorList>
            <person name="Fricke W.F."/>
            <person name="Mammel M.K."/>
            <person name="McDermott P.F."/>
            <person name="Tartera C."/>
            <person name="White D.G."/>
            <person name="Leclerc J.E."/>
            <person name="Ravel J."/>
            <person name="Cebula T.A."/>
        </authorList>
    </citation>
    <scope>NUCLEOTIDE SEQUENCE [LARGE SCALE GENOMIC DNA]</scope>
    <source>
        <strain>SL483</strain>
    </source>
</reference>
<keyword id="KW-0694">RNA-binding</keyword>
<keyword id="KW-0804">Transcription</keyword>
<keyword id="KW-0889">Transcription antitermination</keyword>
<keyword id="KW-0805">Transcription regulation</keyword>